<feature type="chain" id="PRO_0000202770" description="Putative uncharacterized protein YGL042C">
    <location>
        <begin position="1"/>
        <end position="101"/>
    </location>
</feature>
<feature type="transmembrane region" description="Helical" evidence="1">
    <location>
        <begin position="3"/>
        <end position="23"/>
    </location>
</feature>
<feature type="transmembrane region" description="Helical" evidence="1">
    <location>
        <begin position="39"/>
        <end position="59"/>
    </location>
</feature>
<gene>
    <name type="ordered locus">YGL042C</name>
</gene>
<dbReference type="EMBL" id="Z72565">
    <property type="protein sequence ID" value="CAA96745.1"/>
    <property type="molecule type" value="Genomic_DNA"/>
</dbReference>
<dbReference type="EMBL" id="AY693237">
    <property type="protein sequence ID" value="AAT93256.1"/>
    <property type="molecule type" value="Genomic_DNA"/>
</dbReference>
<dbReference type="PIR" id="S64046">
    <property type="entry name" value="S64046"/>
</dbReference>
<dbReference type="DIP" id="DIP-5696N"/>
<dbReference type="IntAct" id="P53181">
    <property type="interactions" value="3"/>
</dbReference>
<dbReference type="MINT" id="P53181"/>
<dbReference type="PaxDb" id="4932-YGL042C"/>
<dbReference type="EnsemblFungi" id="YGL042C_mRNA">
    <property type="protein sequence ID" value="YGL042C"/>
    <property type="gene ID" value="YGL042C"/>
</dbReference>
<dbReference type="AGR" id="SGD:S000003010"/>
<dbReference type="SGD" id="S000003010">
    <property type="gene designation" value="YGL042C"/>
</dbReference>
<dbReference type="HOGENOM" id="CLU_2293900_0_0_1"/>
<dbReference type="GO" id="GO:0016020">
    <property type="term" value="C:membrane"/>
    <property type="evidence" value="ECO:0007669"/>
    <property type="project" value="UniProtKB-SubCell"/>
</dbReference>
<reference key="1">
    <citation type="journal article" date="1997" name="Yeast">
        <title>The characterization of two new clusters of duplicated genes suggests a 'Lego' organization of the yeast Saccharomyces cerevisiae chromosomes.</title>
        <authorList>
            <person name="Feuermann M."/>
            <person name="de Montigny J."/>
            <person name="Potier S."/>
            <person name="Souciet J.-L."/>
        </authorList>
    </citation>
    <scope>NUCLEOTIDE SEQUENCE [GENOMIC DNA]</scope>
    <source>
        <strain>ATCC 204508 / S288c</strain>
    </source>
</reference>
<reference key="2">
    <citation type="journal article" date="1997" name="Nature">
        <title>The nucleotide sequence of Saccharomyces cerevisiae chromosome VII.</title>
        <authorList>
            <person name="Tettelin H."/>
            <person name="Agostoni-Carbone M.L."/>
            <person name="Albermann K."/>
            <person name="Albers M."/>
            <person name="Arroyo J."/>
            <person name="Backes U."/>
            <person name="Barreiros T."/>
            <person name="Bertani I."/>
            <person name="Bjourson A.J."/>
            <person name="Brueckner M."/>
            <person name="Bruschi C.V."/>
            <person name="Carignani G."/>
            <person name="Castagnoli L."/>
            <person name="Cerdan E."/>
            <person name="Clemente M.L."/>
            <person name="Coblenz A."/>
            <person name="Coglievina M."/>
            <person name="Coissac E."/>
            <person name="Defoor E."/>
            <person name="Del Bino S."/>
            <person name="Delius H."/>
            <person name="Delneri D."/>
            <person name="de Wergifosse P."/>
            <person name="Dujon B."/>
            <person name="Durand P."/>
            <person name="Entian K.-D."/>
            <person name="Eraso P."/>
            <person name="Escribano V."/>
            <person name="Fabiani L."/>
            <person name="Fartmann B."/>
            <person name="Feroli F."/>
            <person name="Feuermann M."/>
            <person name="Frontali L."/>
            <person name="Garcia-Gonzalez M."/>
            <person name="Garcia-Saez M.I."/>
            <person name="Goffeau A."/>
            <person name="Guerreiro P."/>
            <person name="Hani J."/>
            <person name="Hansen M."/>
            <person name="Hebling U."/>
            <person name="Hernandez K."/>
            <person name="Heumann K."/>
            <person name="Hilger F."/>
            <person name="Hofmann B."/>
            <person name="Indge K.J."/>
            <person name="James C.M."/>
            <person name="Klima R."/>
            <person name="Koetter P."/>
            <person name="Kramer B."/>
            <person name="Kramer W."/>
            <person name="Lauquin G."/>
            <person name="Leuther H."/>
            <person name="Louis E.J."/>
            <person name="Maillier E."/>
            <person name="Marconi A."/>
            <person name="Martegani E."/>
            <person name="Mazon M.J."/>
            <person name="Mazzoni C."/>
            <person name="McReynolds A.D.K."/>
            <person name="Melchioretto P."/>
            <person name="Mewes H.-W."/>
            <person name="Minenkova O."/>
            <person name="Mueller-Auer S."/>
            <person name="Nawrocki A."/>
            <person name="Netter P."/>
            <person name="Neu R."/>
            <person name="Nombela C."/>
            <person name="Oliver S.G."/>
            <person name="Panzeri L."/>
            <person name="Paoluzi S."/>
            <person name="Plevani P."/>
            <person name="Portetelle D."/>
            <person name="Portillo F."/>
            <person name="Potier S."/>
            <person name="Purnelle B."/>
            <person name="Rieger M."/>
            <person name="Riles L."/>
            <person name="Rinaldi T."/>
            <person name="Robben J."/>
            <person name="Rodrigues-Pousada C."/>
            <person name="Rodriguez-Belmonte E."/>
            <person name="Rodriguez-Torres A.M."/>
            <person name="Rose M."/>
            <person name="Ruzzi M."/>
            <person name="Saliola M."/>
            <person name="Sanchez-Perez M."/>
            <person name="Schaefer B."/>
            <person name="Schaefer M."/>
            <person name="Scharfe M."/>
            <person name="Schmidheini T."/>
            <person name="Schreer A."/>
            <person name="Skala J."/>
            <person name="Souciet J.-L."/>
            <person name="Steensma H.Y."/>
            <person name="Talla E."/>
            <person name="Thierry A."/>
            <person name="Vandenbol M."/>
            <person name="van der Aart Q.J.M."/>
            <person name="Van Dyck L."/>
            <person name="Vanoni M."/>
            <person name="Verhasselt P."/>
            <person name="Voet M."/>
            <person name="Volckaert G."/>
            <person name="Wambutt R."/>
            <person name="Watson M.D."/>
            <person name="Weber N."/>
            <person name="Wedler E."/>
            <person name="Wedler H."/>
            <person name="Wipfli P."/>
            <person name="Wolf K."/>
            <person name="Wright L.F."/>
            <person name="Zaccaria P."/>
            <person name="Zimmermann M."/>
            <person name="Zollner A."/>
            <person name="Kleine K."/>
        </authorList>
    </citation>
    <scope>NUCLEOTIDE SEQUENCE [LARGE SCALE GENOMIC DNA]</scope>
    <source>
        <strain>ATCC 204508 / S288c</strain>
    </source>
</reference>
<reference key="3">
    <citation type="journal article" date="2014" name="G3 (Bethesda)">
        <title>The reference genome sequence of Saccharomyces cerevisiae: Then and now.</title>
        <authorList>
            <person name="Engel S.R."/>
            <person name="Dietrich F.S."/>
            <person name="Fisk D.G."/>
            <person name="Binkley G."/>
            <person name="Balakrishnan R."/>
            <person name="Costanzo M.C."/>
            <person name="Dwight S.S."/>
            <person name="Hitz B.C."/>
            <person name="Karra K."/>
            <person name="Nash R.S."/>
            <person name="Weng S."/>
            <person name="Wong E.D."/>
            <person name="Lloyd P."/>
            <person name="Skrzypek M.S."/>
            <person name="Miyasato S.R."/>
            <person name="Simison M."/>
            <person name="Cherry J.M."/>
        </authorList>
    </citation>
    <scope>GENOME REANNOTATION</scope>
    <source>
        <strain>ATCC 204508 / S288c</strain>
    </source>
</reference>
<reference key="4">
    <citation type="journal article" date="2007" name="Genome Res.">
        <title>Approaching a complete repository of sequence-verified protein-encoding clones for Saccharomyces cerevisiae.</title>
        <authorList>
            <person name="Hu Y."/>
            <person name="Rolfs A."/>
            <person name="Bhullar B."/>
            <person name="Murthy T.V.S."/>
            <person name="Zhu C."/>
            <person name="Berger M.F."/>
            <person name="Camargo A.A."/>
            <person name="Kelley F."/>
            <person name="McCarron S."/>
            <person name="Jepson D."/>
            <person name="Richardson A."/>
            <person name="Raphael J."/>
            <person name="Moreira D."/>
            <person name="Taycher E."/>
            <person name="Zuo D."/>
            <person name="Mohr S."/>
            <person name="Kane M.F."/>
            <person name="Williamson J."/>
            <person name="Simpson A.J.G."/>
            <person name="Bulyk M.L."/>
            <person name="Harlow E."/>
            <person name="Marsischky G."/>
            <person name="Kolodner R.D."/>
            <person name="LaBaer J."/>
        </authorList>
    </citation>
    <scope>NUCLEOTIDE SEQUENCE [GENOMIC DNA]</scope>
    <source>
        <strain>ATCC 204508 / S288c</strain>
    </source>
</reference>
<protein>
    <recommendedName>
        <fullName>Putative uncharacterized protein YGL042C</fullName>
    </recommendedName>
</protein>
<organism>
    <name type="scientific">Saccharomyces cerevisiae (strain ATCC 204508 / S288c)</name>
    <name type="common">Baker's yeast</name>
    <dbReference type="NCBI Taxonomy" id="559292"/>
    <lineage>
        <taxon>Eukaryota</taxon>
        <taxon>Fungi</taxon>
        <taxon>Dikarya</taxon>
        <taxon>Ascomycota</taxon>
        <taxon>Saccharomycotina</taxon>
        <taxon>Saccharomycetes</taxon>
        <taxon>Saccharomycetales</taxon>
        <taxon>Saccharomycetaceae</taxon>
        <taxon>Saccharomyces</taxon>
    </lineage>
</organism>
<comment type="subcellular location">
    <subcellularLocation>
        <location evidence="2">Membrane</location>
        <topology evidence="2">Multi-pass membrane protein</topology>
    </subcellularLocation>
</comment>
<comment type="miscellaneous">
    <text evidence="2">Partially overlaps DST1.</text>
</comment>
<comment type="caution">
    <text evidence="3">Product of a dubious gene prediction unlikely to encode a functional protein. Because of that it is not part of the S.cerevisiae S288c complete/reference proteome set.</text>
</comment>
<sequence length="101" mass="12127">MYIVYEYAISTNWIWLYVWLFLFLDSGCQILLRIESEQAFLSLPPIVSFALSVATLIFFYSKRISICYHMLHMYRKWSMVHPQILFAIDSKIPSSLYIYHM</sequence>
<name>YGE2_YEAST</name>
<evidence type="ECO:0000255" key="1"/>
<evidence type="ECO:0000305" key="2"/>
<evidence type="ECO:0000305" key="3">
    <source>
    </source>
</evidence>
<keyword id="KW-0472">Membrane</keyword>
<keyword id="KW-0812">Transmembrane</keyword>
<keyword id="KW-1133">Transmembrane helix</keyword>
<accession>P53181</accession>
<proteinExistence type="uncertain"/>